<comment type="function">
    <text evidence="2">Transcription repression factor which plays an important role in the establishment of the regional subdivision of the developing brain and in the development of the telencephalon.</text>
</comment>
<comment type="subunit">
    <text evidence="2 3">Interacts with KDM5B (By similarity). Interacts with GRG6/TLE6 (By similarity). Interacts with TLE1; the interaction is inhibited by interaction with TLE6/GRG6 (By similarity).</text>
</comment>
<comment type="subcellular location">
    <subcellularLocation>
        <location evidence="4">Nucleus</location>
    </subcellularLocation>
</comment>
<keyword id="KW-0217">Developmental protein</keyword>
<keyword id="KW-0238">DNA-binding</keyword>
<keyword id="KW-0539">Nucleus</keyword>
<keyword id="KW-0656">Proto-oncogene</keyword>
<keyword id="KW-0804">Transcription</keyword>
<keyword id="KW-0805">Transcription regulation</keyword>
<proteinExistence type="inferred from homology"/>
<feature type="chain" id="PRO_0000254887" description="Forkhead box protein G1">
    <location>
        <begin position="1"/>
        <end position="488"/>
    </location>
</feature>
<feature type="DNA-binding region" description="Fork-head" evidence="4">
    <location>
        <begin position="180"/>
        <end position="274"/>
    </location>
</feature>
<feature type="region of interest" description="Disordered" evidence="5">
    <location>
        <begin position="31"/>
        <end position="180"/>
    </location>
</feature>
<feature type="region of interest" description="Required for interaction with TLE6" evidence="3">
    <location>
        <begin position="248"/>
        <end position="343"/>
    </location>
</feature>
<feature type="region of interest" description="Interaction with KDM5B" evidence="1">
    <location>
        <begin position="382"/>
        <end position="405"/>
    </location>
</feature>
<feature type="region of interest" description="Disordered" evidence="5">
    <location>
        <begin position="426"/>
        <end position="454"/>
    </location>
</feature>
<feature type="compositionally biased region" description="Basic residues" evidence="5">
    <location>
        <begin position="35"/>
        <end position="58"/>
    </location>
</feature>
<feature type="compositionally biased region" description="Pro residues" evidence="5">
    <location>
        <begin position="59"/>
        <end position="80"/>
    </location>
</feature>
<feature type="compositionally biased region" description="Pro residues" evidence="5">
    <location>
        <begin position="102"/>
        <end position="111"/>
    </location>
</feature>
<feature type="compositionally biased region" description="Low complexity" evidence="5">
    <location>
        <begin position="112"/>
        <end position="121"/>
    </location>
</feature>
<feature type="compositionally biased region" description="Gly residues" evidence="5">
    <location>
        <begin position="122"/>
        <end position="134"/>
    </location>
</feature>
<feature type="compositionally biased region" description="Basic and acidic residues" evidence="5">
    <location>
        <begin position="141"/>
        <end position="180"/>
    </location>
</feature>
<feature type="compositionally biased region" description="Low complexity" evidence="5">
    <location>
        <begin position="426"/>
        <end position="449"/>
    </location>
</feature>
<protein>
    <recommendedName>
        <fullName>Forkhead box protein G1</fullName>
        <shortName>FoxG1</shortName>
    </recommendedName>
</protein>
<sequence length="488" mass="52274">MLDMGDRKEVKMIPKSSFSINSLVPEAVQNDNHHASHGHHNSHHPQHHHHHHHHHHHPPPPAPQPPPPPQQQPPPPPQAPQPSQARGVPAADDDKGPQQLLLPPPPPPQPPAAALDGAKADGLGGKGEPGGGPGELAPVGPDEKEKGAGAGGEEKKGAGEGGKDGEGGKEGEKKNGKYEKPPFSYNALIMMAIRQSPEKRLTLNGIYEFIMKNFPYYRENKQGWQNSIRHNLSLNKCFVKVPRHYDDPGKGNYWMLDPSSDDVFIGGTTGKLRRRSTTSRAKLAFKRGARLTSTGLTFMDRAGSLYWPMSPFLSLHHPRASSTLSYNGTTSAYPSHPMPYSSVLTQNSLGNNHSFSTANGLSVDRLVNGEIPYATHHLTAAALAASVPCGLSVPCSGTYSLNPCSVNLLAGQTSYFFPHVPHPSMTSQSSTSMSARAASSSTSPQAPSTLPCESLRPSLPSFTTGLSGGLSDYFTHQNQGSSSNPLIH</sequence>
<accession>Q1A1A2</accession>
<organism>
    <name type="scientific">Equus quagga burchellii</name>
    <name type="common">Burchell's zebra</name>
    <name type="synonym">Equus burchelli</name>
    <dbReference type="NCBI Taxonomy" id="89252"/>
    <lineage>
        <taxon>Eukaryota</taxon>
        <taxon>Metazoa</taxon>
        <taxon>Chordata</taxon>
        <taxon>Craniata</taxon>
        <taxon>Vertebrata</taxon>
        <taxon>Euteleostomi</taxon>
        <taxon>Mammalia</taxon>
        <taxon>Eutheria</taxon>
        <taxon>Laurasiatheria</taxon>
        <taxon>Perissodactyla</taxon>
        <taxon>Equidae</taxon>
        <taxon>Equus</taxon>
        <taxon>Equus quagga</taxon>
    </lineage>
</organism>
<reference key="1">
    <citation type="submission" date="2006-02" db="EMBL/GenBank/DDBJ databases">
        <title>Evolutionary evolution of forkhead box G1.</title>
        <authorList>
            <person name="Bredenkamp N."/>
            <person name="Illing N."/>
        </authorList>
    </citation>
    <scope>NUCLEOTIDE SEQUENCE [GENOMIC DNA]</scope>
</reference>
<evidence type="ECO:0000250" key="1"/>
<evidence type="ECO:0000250" key="2">
    <source>
        <dbReference type="UniProtKB" id="P55316"/>
    </source>
</evidence>
<evidence type="ECO:0000250" key="3">
    <source>
        <dbReference type="UniProtKB" id="Q60987"/>
    </source>
</evidence>
<evidence type="ECO:0000255" key="4">
    <source>
        <dbReference type="PROSITE-ProRule" id="PRU00089"/>
    </source>
</evidence>
<evidence type="ECO:0000256" key="5">
    <source>
        <dbReference type="SAM" id="MobiDB-lite"/>
    </source>
</evidence>
<name>FOXG1_EQUQB</name>
<dbReference type="EMBL" id="DQ387965">
    <property type="protein sequence ID" value="ABD38848.1"/>
    <property type="molecule type" value="Genomic_DNA"/>
</dbReference>
<dbReference type="BMRB" id="Q1A1A2"/>
<dbReference type="SMR" id="Q1A1A2"/>
<dbReference type="GO" id="GO:0005634">
    <property type="term" value="C:nucleus"/>
    <property type="evidence" value="ECO:0007669"/>
    <property type="project" value="UniProtKB-SubCell"/>
</dbReference>
<dbReference type="GO" id="GO:0003700">
    <property type="term" value="F:DNA-binding transcription factor activity"/>
    <property type="evidence" value="ECO:0007669"/>
    <property type="project" value="InterPro"/>
</dbReference>
<dbReference type="GO" id="GO:1990837">
    <property type="term" value="F:sequence-specific double-stranded DNA binding"/>
    <property type="evidence" value="ECO:0007669"/>
    <property type="project" value="TreeGrafter"/>
</dbReference>
<dbReference type="GO" id="GO:0006357">
    <property type="term" value="P:regulation of transcription by RNA polymerase II"/>
    <property type="evidence" value="ECO:0007669"/>
    <property type="project" value="TreeGrafter"/>
</dbReference>
<dbReference type="CDD" id="cd20021">
    <property type="entry name" value="FH_FOXG"/>
    <property type="match status" value="1"/>
</dbReference>
<dbReference type="FunFam" id="1.10.10.10:FF:000135">
    <property type="entry name" value="forkhead box protein G1"/>
    <property type="match status" value="1"/>
</dbReference>
<dbReference type="Gene3D" id="1.10.10.10">
    <property type="entry name" value="Winged helix-like DNA-binding domain superfamily/Winged helix DNA-binding domain"/>
    <property type="match status" value="1"/>
</dbReference>
<dbReference type="InterPro" id="IPR001766">
    <property type="entry name" value="Fork_head_dom"/>
</dbReference>
<dbReference type="InterPro" id="IPR047208">
    <property type="entry name" value="FOXG1"/>
</dbReference>
<dbReference type="InterPro" id="IPR018122">
    <property type="entry name" value="TF_fork_head_CS_1"/>
</dbReference>
<dbReference type="InterPro" id="IPR030456">
    <property type="entry name" value="TF_fork_head_CS_2"/>
</dbReference>
<dbReference type="InterPro" id="IPR036388">
    <property type="entry name" value="WH-like_DNA-bd_sf"/>
</dbReference>
<dbReference type="InterPro" id="IPR036390">
    <property type="entry name" value="WH_DNA-bd_sf"/>
</dbReference>
<dbReference type="PANTHER" id="PTHR46617">
    <property type="entry name" value="FORKHEAD BOX PROTEIN G1"/>
    <property type="match status" value="1"/>
</dbReference>
<dbReference type="PANTHER" id="PTHR46617:SF3">
    <property type="entry name" value="FORKHEAD BOX PROTEIN G1"/>
    <property type="match status" value="1"/>
</dbReference>
<dbReference type="Pfam" id="PF00250">
    <property type="entry name" value="Forkhead"/>
    <property type="match status" value="1"/>
</dbReference>
<dbReference type="PRINTS" id="PR00053">
    <property type="entry name" value="FORKHEAD"/>
</dbReference>
<dbReference type="SMART" id="SM00339">
    <property type="entry name" value="FH"/>
    <property type="match status" value="1"/>
</dbReference>
<dbReference type="SUPFAM" id="SSF81995">
    <property type="entry name" value="beta-sandwich domain of Sec23/24"/>
    <property type="match status" value="1"/>
</dbReference>
<dbReference type="SUPFAM" id="SSF46785">
    <property type="entry name" value="Winged helix' DNA-binding domain"/>
    <property type="match status" value="1"/>
</dbReference>
<dbReference type="PROSITE" id="PS00657">
    <property type="entry name" value="FORK_HEAD_1"/>
    <property type="match status" value="1"/>
</dbReference>
<dbReference type="PROSITE" id="PS00658">
    <property type="entry name" value="FORK_HEAD_2"/>
    <property type="match status" value="1"/>
</dbReference>
<dbReference type="PROSITE" id="PS50039">
    <property type="entry name" value="FORK_HEAD_3"/>
    <property type="match status" value="1"/>
</dbReference>
<gene>
    <name type="primary">FOXG1</name>
</gene>